<keyword id="KW-0002">3D-structure</keyword>
<keyword id="KW-0961">Cell wall biogenesis/degradation</keyword>
<keyword id="KW-0963">Cytoplasm</keyword>
<keyword id="KW-0596">Phosphopantetheine</keyword>
<keyword id="KW-0597">Phosphoprotein</keyword>
<comment type="function">
    <text evidence="1">Carrier protein involved in the D-alanylation of lipoteichoic acid (LTA). The loading of thioester-linked D-alanine onto DltC is catalyzed by D-alanine--D-alanyl carrier protein ligase DltA. The DltC-carried D-alanyl group is further transferred to cell membrane phosphatidylglycerol (PG) by forming an ester bond, probably catalyzed by DltD. D-alanylation of LTA plays an important role in modulating the properties of the cell wall in Gram-positive bacteria, influencing the net charge of the cell wall.</text>
</comment>
<comment type="pathway">
    <text evidence="1">Cell wall biogenesis; lipoteichoic acid biosynthesis.</text>
</comment>
<comment type="subcellular location">
    <subcellularLocation>
        <location evidence="1">Cytoplasm</location>
    </subcellularLocation>
</comment>
<comment type="PTM">
    <text evidence="1">4'-phosphopantetheine is transferred from CoA to a specific serine of apo-DCP.</text>
</comment>
<comment type="similarity">
    <text evidence="1">Belongs to the DltC family.</text>
</comment>
<proteinExistence type="evidence at protein level"/>
<organism>
    <name type="scientific">Lacticaseibacillus rhamnosus</name>
    <name type="common">Lactobacillus rhamnosus</name>
    <dbReference type="NCBI Taxonomy" id="47715"/>
    <lineage>
        <taxon>Bacteria</taxon>
        <taxon>Bacillati</taxon>
        <taxon>Bacillota</taxon>
        <taxon>Bacilli</taxon>
        <taxon>Lactobacillales</taxon>
        <taxon>Lactobacillaceae</taxon>
        <taxon>Lacticaseibacillus</taxon>
    </lineage>
</organism>
<sequence>MADEAIKNGVLDILADLTGSDDVKKNLDLNLFETGLLDSMGTVQLLLELQSQFGVDAPVSEFDRKEWDTPNKIIAKVEQAQ</sequence>
<gene>
    <name evidence="1" type="primary">dltC</name>
</gene>
<evidence type="ECO:0000255" key="1">
    <source>
        <dbReference type="HAMAP-Rule" id="MF_00565"/>
    </source>
</evidence>
<evidence type="ECO:0007829" key="2">
    <source>
        <dbReference type="PDB" id="1DV5"/>
    </source>
</evidence>
<name>DLTC_LACRH</name>
<feature type="chain" id="PRO_0000213093" description="D-alanyl carrier protein">
    <location>
        <begin position="1"/>
        <end position="81"/>
    </location>
</feature>
<feature type="domain" description="Carrier" evidence="1">
    <location>
        <begin position="1"/>
        <end position="81"/>
    </location>
</feature>
<feature type="modified residue" description="O-(pantetheine 4'-phosphoryl)serine" evidence="1">
    <location>
        <position position="39"/>
    </location>
</feature>
<feature type="helix" evidence="2">
    <location>
        <begin position="4"/>
        <end position="18"/>
    </location>
</feature>
<feature type="strand" evidence="2">
    <location>
        <begin position="20"/>
        <end position="22"/>
    </location>
</feature>
<feature type="turn" evidence="2">
    <location>
        <begin position="23"/>
        <end position="25"/>
    </location>
</feature>
<feature type="helix" evidence="2">
    <location>
        <begin position="40"/>
        <end position="49"/>
    </location>
</feature>
<feature type="turn" evidence="2">
    <location>
        <begin position="64"/>
        <end position="68"/>
    </location>
</feature>
<feature type="helix" evidence="2">
    <location>
        <begin position="70"/>
        <end position="78"/>
    </location>
</feature>
<reference key="1">
    <citation type="journal article" date="1996" name="J. Bacteriol.">
        <title>The D-alanyl carrier protein in Lactobacillus casei: cloning, sequencing, and expression of dltC.</title>
        <authorList>
            <person name="Debabov D.V."/>
            <person name="Heaton M.P."/>
            <person name="Zhang Q."/>
            <person name="Stewart K."/>
            <person name="Lambalot R.H."/>
            <person name="Neuhaus F.C."/>
        </authorList>
    </citation>
    <scope>NUCLEOTIDE SEQUENCE [GENOMIC DNA]</scope>
    <source>
        <strain>ATCC 7469 / DSM 20021 / JCM 1136 / CCUG 21452 / KCTC 1046 / NCDO 243 / NCIMB 6375 / NCTC 12953</strain>
    </source>
</reference>
<reference key="2">
    <citation type="journal article" date="2001" name="J. Bacteriol.">
        <title>D-alanylation of lipoteichoic acid: role of the D-alanyl carrier protein in acylation.</title>
        <authorList>
            <person name="Kiriukhin M.Y."/>
            <person name="Neuhaus F.C."/>
        </authorList>
    </citation>
    <scope>CHARACTERIZATION</scope>
</reference>
<reference key="3">
    <citation type="journal article" date="2001" name="Biochemistry">
        <title>Biosynthesis of D-alanyl-lipoteichoic acid: the tertiary structure of apo-D-alanyl carrier protein.</title>
        <authorList>
            <person name="Volkman B.F."/>
            <person name="Zhang Q."/>
            <person name="Debabov D.V."/>
            <person name="Rivera E."/>
            <person name="Kresheck G.C."/>
            <person name="Neuhaus F.C."/>
        </authorList>
    </citation>
    <scope>STRUCTURE BY NMR OF 2-81</scope>
</reference>
<accession>P55153</accession>
<protein>
    <recommendedName>
        <fullName evidence="1">D-alanyl carrier protein</fullName>
        <shortName evidence="1">DCP</shortName>
    </recommendedName>
    <alternativeName>
        <fullName evidence="1">D-alanine--poly(phosphoribitol) ligase subunit 2</fullName>
    </alternativeName>
</protein>
<dbReference type="EMBL" id="U43894">
    <property type="protein sequence ID" value="AAB17659.1"/>
    <property type="molecule type" value="Genomic_DNA"/>
</dbReference>
<dbReference type="RefSeq" id="WP_005685531.1">
    <property type="nucleotide sequence ID" value="NZ_WPCQ01000011.1"/>
</dbReference>
<dbReference type="PDB" id="1DV5">
    <property type="method" value="NMR"/>
    <property type="chains" value="A=2-81"/>
</dbReference>
<dbReference type="PDBsum" id="1DV5"/>
<dbReference type="BMRB" id="P55153"/>
<dbReference type="SMR" id="P55153"/>
<dbReference type="STRING" id="47715.AWJ15_13955"/>
<dbReference type="eggNOG" id="COG0236">
    <property type="taxonomic scope" value="Bacteria"/>
</dbReference>
<dbReference type="OMA" id="ISDQMDD"/>
<dbReference type="OrthoDB" id="6462171at2"/>
<dbReference type="UniPathway" id="UPA00556"/>
<dbReference type="EvolutionaryTrace" id="P55153"/>
<dbReference type="GO" id="GO:0005737">
    <property type="term" value="C:cytoplasm"/>
    <property type="evidence" value="ECO:0007669"/>
    <property type="project" value="UniProtKB-SubCell"/>
</dbReference>
<dbReference type="GO" id="GO:0036370">
    <property type="term" value="F:D-alanyl carrier activity"/>
    <property type="evidence" value="ECO:0007669"/>
    <property type="project" value="UniProtKB-UniRule"/>
</dbReference>
<dbReference type="GO" id="GO:0071555">
    <property type="term" value="P:cell wall organization"/>
    <property type="evidence" value="ECO:0007669"/>
    <property type="project" value="UniProtKB-KW"/>
</dbReference>
<dbReference type="GO" id="GO:0070395">
    <property type="term" value="P:lipoteichoic acid biosynthetic process"/>
    <property type="evidence" value="ECO:0007669"/>
    <property type="project" value="UniProtKB-UniRule"/>
</dbReference>
<dbReference type="Gene3D" id="1.10.1200.10">
    <property type="entry name" value="ACP-like"/>
    <property type="match status" value="1"/>
</dbReference>
<dbReference type="HAMAP" id="MF_00565">
    <property type="entry name" value="DltC"/>
    <property type="match status" value="1"/>
</dbReference>
<dbReference type="InterPro" id="IPR036736">
    <property type="entry name" value="ACP-like_sf"/>
</dbReference>
<dbReference type="InterPro" id="IPR003230">
    <property type="entry name" value="DltC"/>
</dbReference>
<dbReference type="InterPro" id="IPR009081">
    <property type="entry name" value="PP-bd_ACP"/>
</dbReference>
<dbReference type="NCBIfam" id="TIGR01688">
    <property type="entry name" value="dltC"/>
    <property type="match status" value="1"/>
</dbReference>
<dbReference type="NCBIfam" id="NF003464">
    <property type="entry name" value="PRK05087.1"/>
    <property type="match status" value="1"/>
</dbReference>
<dbReference type="Pfam" id="PF00550">
    <property type="entry name" value="PP-binding"/>
    <property type="match status" value="1"/>
</dbReference>
<dbReference type="SUPFAM" id="SSF47336">
    <property type="entry name" value="ACP-like"/>
    <property type="match status" value="1"/>
</dbReference>
<dbReference type="PROSITE" id="PS50075">
    <property type="entry name" value="CARRIER"/>
    <property type="match status" value="1"/>
</dbReference>